<gene>
    <name type="primary">pgsA</name>
</gene>
<comment type="function">
    <text evidence="1">This protein catalyzes the committed step to the synthesis of the acidic phospholipids.</text>
</comment>
<comment type="catalytic activity">
    <reaction>
        <text>a CDP-1,2-diacyl-sn-glycerol + sn-glycerol 3-phosphate = a 1,2-diacyl-sn-glycero-3-phospho-(1'-sn-glycero-3'-phosphate) + CMP + H(+)</text>
        <dbReference type="Rhea" id="RHEA:12593"/>
        <dbReference type="ChEBI" id="CHEBI:15378"/>
        <dbReference type="ChEBI" id="CHEBI:57597"/>
        <dbReference type="ChEBI" id="CHEBI:58332"/>
        <dbReference type="ChEBI" id="CHEBI:60110"/>
        <dbReference type="ChEBI" id="CHEBI:60377"/>
        <dbReference type="EC" id="2.7.8.5"/>
    </reaction>
</comment>
<comment type="pathway">
    <text>Phospholipid metabolism; phosphatidylglycerol biosynthesis; phosphatidylglycerol from CDP-diacylglycerol: step 1/2.</text>
</comment>
<comment type="subcellular location">
    <subcellularLocation>
        <location evidence="1">Cell membrane</location>
        <topology evidence="1">Multi-pass membrane protein</topology>
    </subcellularLocation>
</comment>
<comment type="similarity">
    <text evidence="3">Belongs to the CDP-alcohol phosphatidyltransferase class-I family.</text>
</comment>
<proteinExistence type="inferred from homology"/>
<sequence length="195" mass="21846">MNIPNLITVLRVLLIPIFILLFYLPYNWSYMAASSVFAFAAATDWLDGYLARRLEQSTPFGAFLDPVADKLMVAVALVLLVQEHGNLWLTLPAAVIIGREIVVSALREWMAELGRTRPGGRCPTWANRKTAAQMLALVILLANPPAFTFWVLLGYAFLLIAGGLTLWSMLQYLRAAWPHLKTDGRKEIKLFESRG</sequence>
<protein>
    <recommendedName>
        <fullName>CDP-diacylglycerol--glycerol-3-phosphate 3-phosphatidyltransferase</fullName>
        <ecNumber>2.7.8.5</ecNumber>
    </recommendedName>
    <alternativeName>
        <fullName>Phosphatidylglycerophosphate synthase</fullName>
        <shortName>PGP synthase</shortName>
    </alternativeName>
</protein>
<reference key="1">
    <citation type="journal article" date="1994" name="Mol. Plant Microbe Interact.">
        <title>Global regulation of expression of antifungal factors by a Pseudomonas fluorescens biological control strain.</title>
        <authorList>
            <person name="Gaffney T.D."/>
            <person name="Lam S.T."/>
            <person name="Ligon J."/>
            <person name="Gates K."/>
            <person name="Frazelle A."/>
            <person name="Maio J."/>
            <person name="Hill S."/>
            <person name="Goodwin S."/>
            <person name="Torkewitz N."/>
            <person name="Allshouse A.M."/>
            <person name="Kempf H.J."/>
            <person name="Becker J.O."/>
        </authorList>
    </citation>
    <scope>NUCLEOTIDE SEQUENCE [GENOMIC DNA]</scope>
    <source>
        <strain>BL915</strain>
    </source>
</reference>
<feature type="chain" id="PRO_0000056781" description="CDP-diacylglycerol--glycerol-3-phosphate 3-phosphatidyltransferase">
    <location>
        <begin position="1"/>
        <end position="195"/>
    </location>
</feature>
<feature type="transmembrane region" description="Helical" evidence="2">
    <location>
        <begin position="7"/>
        <end position="24"/>
    </location>
</feature>
<feature type="transmembrane region" description="Helical" evidence="2">
    <location>
        <begin position="60"/>
        <end position="81"/>
    </location>
</feature>
<feature type="transmembrane region" description="Helical" evidence="2">
    <location>
        <begin position="134"/>
        <end position="150"/>
    </location>
</feature>
<feature type="transmembrane region" description="Helical" evidence="2">
    <location>
        <begin position="157"/>
        <end position="173"/>
    </location>
</feature>
<organism>
    <name type="scientific">Pseudomonas fluorescens</name>
    <dbReference type="NCBI Taxonomy" id="294"/>
    <lineage>
        <taxon>Bacteria</taxon>
        <taxon>Pseudomonadati</taxon>
        <taxon>Pseudomonadota</taxon>
        <taxon>Gammaproteobacteria</taxon>
        <taxon>Pseudomonadales</taxon>
        <taxon>Pseudomonadaceae</taxon>
        <taxon>Pseudomonas</taxon>
    </lineage>
</organism>
<keyword id="KW-1003">Cell membrane</keyword>
<keyword id="KW-0444">Lipid biosynthesis</keyword>
<keyword id="KW-0443">Lipid metabolism</keyword>
<keyword id="KW-0472">Membrane</keyword>
<keyword id="KW-0594">Phospholipid biosynthesis</keyword>
<keyword id="KW-1208">Phospholipid metabolism</keyword>
<keyword id="KW-0808">Transferase</keyword>
<keyword id="KW-0812">Transmembrane</keyword>
<keyword id="KW-1133">Transmembrane helix</keyword>
<dbReference type="EC" id="2.7.8.5"/>
<dbReference type="EMBL" id="L29642">
    <property type="protein sequence ID" value="AAA98757.1"/>
    <property type="molecule type" value="Genomic_DNA"/>
</dbReference>
<dbReference type="SMR" id="P45419"/>
<dbReference type="UniPathway" id="UPA00084">
    <property type="reaction ID" value="UER00503"/>
</dbReference>
<dbReference type="GO" id="GO:0005886">
    <property type="term" value="C:plasma membrane"/>
    <property type="evidence" value="ECO:0007669"/>
    <property type="project" value="UniProtKB-SubCell"/>
</dbReference>
<dbReference type="GO" id="GO:0008444">
    <property type="term" value="F:CDP-diacylglycerol-glycerol-3-phosphate 3-phosphatidyltransferase activity"/>
    <property type="evidence" value="ECO:0007669"/>
    <property type="project" value="UniProtKB-EC"/>
</dbReference>
<dbReference type="GO" id="GO:0006655">
    <property type="term" value="P:phosphatidylglycerol biosynthetic process"/>
    <property type="evidence" value="ECO:0007669"/>
    <property type="project" value="UniProtKB-UniPathway"/>
</dbReference>
<dbReference type="Gene3D" id="1.20.120.1760">
    <property type="match status" value="1"/>
</dbReference>
<dbReference type="InterPro" id="IPR050324">
    <property type="entry name" value="CDP-alcohol_PTase-I"/>
</dbReference>
<dbReference type="InterPro" id="IPR000462">
    <property type="entry name" value="CDP-OH_P_trans"/>
</dbReference>
<dbReference type="InterPro" id="IPR043130">
    <property type="entry name" value="CDP-OH_PTrfase_TM_dom"/>
</dbReference>
<dbReference type="InterPro" id="IPR048254">
    <property type="entry name" value="CDP_ALCOHOL_P_TRANSF_CS"/>
</dbReference>
<dbReference type="InterPro" id="IPR004570">
    <property type="entry name" value="Phosphatidylglycerol_P_synth"/>
</dbReference>
<dbReference type="NCBIfam" id="TIGR00560">
    <property type="entry name" value="pgsA"/>
    <property type="match status" value="1"/>
</dbReference>
<dbReference type="PANTHER" id="PTHR14269:SF62">
    <property type="entry name" value="CDP-DIACYLGLYCEROL--GLYCEROL-3-PHOSPHATE 3-PHOSPHATIDYLTRANSFERASE 1, CHLOROPLASTIC"/>
    <property type="match status" value="1"/>
</dbReference>
<dbReference type="PANTHER" id="PTHR14269">
    <property type="entry name" value="CDP-DIACYLGLYCEROL--GLYCEROL-3-PHOSPHATE 3-PHOSPHATIDYLTRANSFERASE-RELATED"/>
    <property type="match status" value="1"/>
</dbReference>
<dbReference type="Pfam" id="PF01066">
    <property type="entry name" value="CDP-OH_P_transf"/>
    <property type="match status" value="1"/>
</dbReference>
<dbReference type="PIRSF" id="PIRSF000847">
    <property type="entry name" value="Phos_ph_gly_syn"/>
    <property type="match status" value="1"/>
</dbReference>
<dbReference type="PROSITE" id="PS00379">
    <property type="entry name" value="CDP_ALCOHOL_P_TRANSF"/>
    <property type="match status" value="1"/>
</dbReference>
<evidence type="ECO:0000250" key="1"/>
<evidence type="ECO:0000255" key="2"/>
<evidence type="ECO:0000305" key="3"/>
<name>PGSA_PSEFL</name>
<accession>P45419</accession>